<accession>Q73V12</accession>
<organism>
    <name type="scientific">Mycolicibacterium paratuberculosis (strain ATCC BAA-968 / K-10)</name>
    <name type="common">Mycobacterium paratuberculosis</name>
    <dbReference type="NCBI Taxonomy" id="262316"/>
    <lineage>
        <taxon>Bacteria</taxon>
        <taxon>Bacillati</taxon>
        <taxon>Actinomycetota</taxon>
        <taxon>Actinomycetes</taxon>
        <taxon>Mycobacteriales</taxon>
        <taxon>Mycobacteriaceae</taxon>
        <taxon>Mycobacterium</taxon>
        <taxon>Mycobacterium avium complex (MAC)</taxon>
    </lineage>
</organism>
<gene>
    <name evidence="1" type="primary">nuoD</name>
    <name type="ordered locus">MAP_3204</name>
</gene>
<reference key="1">
    <citation type="journal article" date="2005" name="Proc. Natl. Acad. Sci. U.S.A.">
        <title>The complete genome sequence of Mycobacterium avium subspecies paratuberculosis.</title>
        <authorList>
            <person name="Li L."/>
            <person name="Bannantine J.P."/>
            <person name="Zhang Q."/>
            <person name="Amonsin A."/>
            <person name="May B.J."/>
            <person name="Alt D."/>
            <person name="Banerji N."/>
            <person name="Kanjilal S."/>
            <person name="Kapur V."/>
        </authorList>
    </citation>
    <scope>NUCLEOTIDE SEQUENCE [LARGE SCALE GENOMIC DNA]</scope>
    <source>
        <strain>ATCC BAA-968 / K-10</strain>
    </source>
</reference>
<name>NUOD_MYCPA</name>
<feature type="chain" id="PRO_0000357857" description="NADH-quinone oxidoreductase subunit D">
    <location>
        <begin position="1"/>
        <end position="441"/>
    </location>
</feature>
<sequence>MSTTTESTHDGAGETLVVAGGQDWDKVVEAARSADPGERIVVNMGPQHPSTHGVLRLILEIEGETVTEARCGIGYLHTGIEKNLEYRYWTQGVTFVTRMDYLSPFFNETAYCLGVEKLLGITDQIPERVNVIRVMMMELNRISSHLVALATGGMELGAMTPMFVGFRGREIVLTLFESITGLRMNSAYIRPGGVAQDLPPNAKTEIAQALDQLRQPLREMGDLLNENAIWKARTQDIGYLDLTGCMALGITGPILRATGLPHDLRKSEPYCGYENYEFDVITADTCDAYGRYMIRVKEMWESIKIVEQCLDKLQPGPIMVENGKIAWPADLKVGPDGLGNSPEHIAKIMGGSMEALIHHFKLVTEGIRVPPGQVYTAVESPRGELGVHMVSDGGTRPYRVHYRDPSFTNLQSVAAMCEGGMVADLITAVASIDPVMGGVDR</sequence>
<comment type="function">
    <text evidence="1">NDH-1 shuttles electrons from NADH, via FMN and iron-sulfur (Fe-S) centers, to quinones in the respiratory chain. The immediate electron acceptor for the enzyme in this species is believed to be a menaquinone. Couples the redox reaction to proton translocation (for every two electrons transferred, four hydrogen ions are translocated across the cytoplasmic membrane), and thus conserves the redox energy in a proton gradient.</text>
</comment>
<comment type="catalytic activity">
    <reaction evidence="1">
        <text>a quinone + NADH + 5 H(+)(in) = a quinol + NAD(+) + 4 H(+)(out)</text>
        <dbReference type="Rhea" id="RHEA:57888"/>
        <dbReference type="ChEBI" id="CHEBI:15378"/>
        <dbReference type="ChEBI" id="CHEBI:24646"/>
        <dbReference type="ChEBI" id="CHEBI:57540"/>
        <dbReference type="ChEBI" id="CHEBI:57945"/>
        <dbReference type="ChEBI" id="CHEBI:132124"/>
    </reaction>
</comment>
<comment type="subunit">
    <text evidence="1">NDH-1 is composed of 14 different subunits. Subunits NuoB, C, D, E, F, and G constitute the peripheral sector of the complex.</text>
</comment>
<comment type="subcellular location">
    <subcellularLocation>
        <location evidence="1">Cell membrane</location>
        <topology evidence="1">Peripheral membrane protein</topology>
        <orientation evidence="1">Cytoplasmic side</orientation>
    </subcellularLocation>
</comment>
<comment type="similarity">
    <text evidence="1">Belongs to the complex I 49 kDa subunit family.</text>
</comment>
<protein>
    <recommendedName>
        <fullName evidence="1">NADH-quinone oxidoreductase subunit D</fullName>
        <ecNumber evidence="1">7.1.1.-</ecNumber>
    </recommendedName>
    <alternativeName>
        <fullName evidence="1">NADH dehydrogenase I subunit D</fullName>
    </alternativeName>
    <alternativeName>
        <fullName evidence="1">NDH-1 subunit D</fullName>
    </alternativeName>
</protein>
<dbReference type="EC" id="7.1.1.-" evidence="1"/>
<dbReference type="EMBL" id="AE016958">
    <property type="protein sequence ID" value="AAS05752.1"/>
    <property type="molecule type" value="Genomic_DNA"/>
</dbReference>
<dbReference type="RefSeq" id="WP_003874819.1">
    <property type="nucleotide sequence ID" value="NZ_CP106873.1"/>
</dbReference>
<dbReference type="SMR" id="Q73V12"/>
<dbReference type="STRING" id="262316.MAP_3204"/>
<dbReference type="GeneID" id="75271518"/>
<dbReference type="KEGG" id="mpa:MAP_3204"/>
<dbReference type="eggNOG" id="COG0649">
    <property type="taxonomic scope" value="Bacteria"/>
</dbReference>
<dbReference type="HOGENOM" id="CLU_015134_1_2_11"/>
<dbReference type="Proteomes" id="UP000000580">
    <property type="component" value="Chromosome"/>
</dbReference>
<dbReference type="GO" id="GO:0005886">
    <property type="term" value="C:plasma membrane"/>
    <property type="evidence" value="ECO:0007669"/>
    <property type="project" value="UniProtKB-SubCell"/>
</dbReference>
<dbReference type="GO" id="GO:0051287">
    <property type="term" value="F:NAD binding"/>
    <property type="evidence" value="ECO:0007669"/>
    <property type="project" value="InterPro"/>
</dbReference>
<dbReference type="GO" id="GO:0050136">
    <property type="term" value="F:NADH:ubiquinone reductase (non-electrogenic) activity"/>
    <property type="evidence" value="ECO:0007669"/>
    <property type="project" value="UniProtKB-UniRule"/>
</dbReference>
<dbReference type="GO" id="GO:0048038">
    <property type="term" value="F:quinone binding"/>
    <property type="evidence" value="ECO:0007669"/>
    <property type="project" value="UniProtKB-KW"/>
</dbReference>
<dbReference type="FunFam" id="1.10.645.10:FF:000005">
    <property type="entry name" value="NADH-quinone oxidoreductase subunit D"/>
    <property type="match status" value="1"/>
</dbReference>
<dbReference type="Gene3D" id="1.10.645.10">
    <property type="entry name" value="Cytochrome-c3 Hydrogenase, chain B"/>
    <property type="match status" value="1"/>
</dbReference>
<dbReference type="HAMAP" id="MF_01358">
    <property type="entry name" value="NDH1_NuoD"/>
    <property type="match status" value="1"/>
</dbReference>
<dbReference type="InterPro" id="IPR001135">
    <property type="entry name" value="NADH_Q_OxRdtase_suD"/>
</dbReference>
<dbReference type="InterPro" id="IPR014029">
    <property type="entry name" value="NADH_UbQ_OxRdtase_49kDa_CS"/>
</dbReference>
<dbReference type="InterPro" id="IPR022885">
    <property type="entry name" value="NDH1_su_D/H"/>
</dbReference>
<dbReference type="InterPro" id="IPR029014">
    <property type="entry name" value="NiFe-Hase_large"/>
</dbReference>
<dbReference type="NCBIfam" id="TIGR01962">
    <property type="entry name" value="NuoD"/>
    <property type="match status" value="1"/>
</dbReference>
<dbReference type="NCBIfam" id="NF004739">
    <property type="entry name" value="PRK06075.1"/>
    <property type="match status" value="1"/>
</dbReference>
<dbReference type="PANTHER" id="PTHR11993:SF10">
    <property type="entry name" value="NADH DEHYDROGENASE [UBIQUINONE] IRON-SULFUR PROTEIN 2, MITOCHONDRIAL"/>
    <property type="match status" value="1"/>
</dbReference>
<dbReference type="PANTHER" id="PTHR11993">
    <property type="entry name" value="NADH-UBIQUINONE OXIDOREDUCTASE 49 KDA SUBUNIT"/>
    <property type="match status" value="1"/>
</dbReference>
<dbReference type="Pfam" id="PF00346">
    <property type="entry name" value="Complex1_49kDa"/>
    <property type="match status" value="1"/>
</dbReference>
<dbReference type="SUPFAM" id="SSF56762">
    <property type="entry name" value="HydB/Nqo4-like"/>
    <property type="match status" value="1"/>
</dbReference>
<dbReference type="PROSITE" id="PS00535">
    <property type="entry name" value="COMPLEX1_49K"/>
    <property type="match status" value="1"/>
</dbReference>
<evidence type="ECO:0000255" key="1">
    <source>
        <dbReference type="HAMAP-Rule" id="MF_01358"/>
    </source>
</evidence>
<keyword id="KW-1003">Cell membrane</keyword>
<keyword id="KW-0472">Membrane</keyword>
<keyword id="KW-0520">NAD</keyword>
<keyword id="KW-0874">Quinone</keyword>
<keyword id="KW-1185">Reference proteome</keyword>
<keyword id="KW-1278">Translocase</keyword>
<keyword id="KW-0813">Transport</keyword>
<proteinExistence type="inferred from homology"/>